<gene>
    <name type="primary">GAD1</name>
    <name type="synonym">GAD67</name>
</gene>
<organism>
    <name type="scientific">Canis lupus familiaris</name>
    <name type="common">Dog</name>
    <name type="synonym">Canis familiaris</name>
    <dbReference type="NCBI Taxonomy" id="9615"/>
    <lineage>
        <taxon>Eukaryota</taxon>
        <taxon>Metazoa</taxon>
        <taxon>Chordata</taxon>
        <taxon>Craniata</taxon>
        <taxon>Vertebrata</taxon>
        <taxon>Euteleostomi</taxon>
        <taxon>Mammalia</taxon>
        <taxon>Eutheria</taxon>
        <taxon>Laurasiatheria</taxon>
        <taxon>Carnivora</taxon>
        <taxon>Caniformia</taxon>
        <taxon>Canidae</taxon>
        <taxon>Canis</taxon>
    </lineage>
</organism>
<reference key="1">
    <citation type="journal article" date="2008" name="J. Vet. Med. Sci.">
        <title>Sequences of canine glutamate decarboxylase (GAD) 1 and GAD2 genes, and variation of their genetic polymorphisms among five dog breeds.</title>
        <authorList>
            <person name="Arata S."/>
            <person name="Hashizume C."/>
            <person name="Kikusui T."/>
            <person name="Takeuchi Y."/>
            <person name="Mori Y."/>
        </authorList>
    </citation>
    <scope>NUCLEOTIDE SEQUENCE [MRNA]</scope>
</reference>
<name>DCE1_CANLF</name>
<dbReference type="EC" id="4.1.1.15" evidence="2"/>
<dbReference type="EMBL" id="AB261624">
    <property type="protein sequence ID" value="BAF37949.1"/>
    <property type="molecule type" value="mRNA"/>
</dbReference>
<dbReference type="RefSeq" id="NP_001091012.1">
    <property type="nucleotide sequence ID" value="NM_001097543.1"/>
</dbReference>
<dbReference type="RefSeq" id="XP_038302631.1">
    <property type="nucleotide sequence ID" value="XM_038446703.1"/>
</dbReference>
<dbReference type="SMR" id="A0PA85"/>
<dbReference type="FunCoup" id="A0PA85">
    <property type="interactions" value="184"/>
</dbReference>
<dbReference type="STRING" id="9615.ENSCAFP00000039685"/>
<dbReference type="PaxDb" id="9612-ENSCAFP00000039685"/>
<dbReference type="Ensembl" id="ENSCAFT00000109479.1">
    <property type="protein sequence ID" value="ENSCAFP00000074319.1"/>
    <property type="gene ID" value="ENSCAFG00000012560.6"/>
</dbReference>
<dbReference type="Ensembl" id="ENSCAFT00030020730.1">
    <property type="protein sequence ID" value="ENSCAFP00030018077.1"/>
    <property type="gene ID" value="ENSCAFG00030011184.1"/>
</dbReference>
<dbReference type="Ensembl" id="ENSCAFT00040048453.1">
    <property type="protein sequence ID" value="ENSCAFP00040042327.1"/>
    <property type="gene ID" value="ENSCAFG00040025904.1"/>
</dbReference>
<dbReference type="Ensembl" id="ENSCAFT00845045887.1">
    <property type="protein sequence ID" value="ENSCAFP00845036025.1"/>
    <property type="gene ID" value="ENSCAFG00845025996.1"/>
</dbReference>
<dbReference type="GeneID" id="478794"/>
<dbReference type="KEGG" id="cfa:478794"/>
<dbReference type="CTD" id="2571"/>
<dbReference type="VEuPathDB" id="HostDB:ENSCAFG00845025996"/>
<dbReference type="VGNC" id="VGNC:41067">
    <property type="gene designation" value="GAD1"/>
</dbReference>
<dbReference type="eggNOG" id="KOG0629">
    <property type="taxonomic scope" value="Eukaryota"/>
</dbReference>
<dbReference type="GeneTree" id="ENSGT00940000155526"/>
<dbReference type="InParanoid" id="A0PA85"/>
<dbReference type="OrthoDB" id="392571at2759"/>
<dbReference type="Reactome" id="R-CFA-888568">
    <property type="pathway name" value="GABA synthesis"/>
</dbReference>
<dbReference type="Reactome" id="R-CFA-888590">
    <property type="pathway name" value="GABA synthesis, release, reuptake and degradation"/>
</dbReference>
<dbReference type="Proteomes" id="UP000002254">
    <property type="component" value="Chromosome 36"/>
</dbReference>
<dbReference type="Proteomes" id="UP000694429">
    <property type="component" value="Chromosome 36"/>
</dbReference>
<dbReference type="Proteomes" id="UP000694542">
    <property type="component" value="Chromosome 36"/>
</dbReference>
<dbReference type="Proteomes" id="UP000805418">
    <property type="component" value="Chromosome 36"/>
</dbReference>
<dbReference type="GO" id="GO:0043679">
    <property type="term" value="C:axon terminus"/>
    <property type="evidence" value="ECO:0007669"/>
    <property type="project" value="Ensembl"/>
</dbReference>
<dbReference type="GO" id="GO:0005938">
    <property type="term" value="C:cell cortex"/>
    <property type="evidence" value="ECO:0007669"/>
    <property type="project" value="Ensembl"/>
</dbReference>
<dbReference type="GO" id="GO:0098982">
    <property type="term" value="C:GABA-ergic synapse"/>
    <property type="evidence" value="ECO:0007669"/>
    <property type="project" value="Ensembl"/>
</dbReference>
<dbReference type="GO" id="GO:0060077">
    <property type="term" value="C:inhibitory synapse"/>
    <property type="evidence" value="ECO:0007669"/>
    <property type="project" value="Ensembl"/>
</dbReference>
<dbReference type="GO" id="GO:0048471">
    <property type="term" value="C:perinuclear region of cytoplasm"/>
    <property type="evidence" value="ECO:0007669"/>
    <property type="project" value="Ensembl"/>
</dbReference>
<dbReference type="GO" id="GO:0048786">
    <property type="term" value="C:presynaptic active zone"/>
    <property type="evidence" value="ECO:0007669"/>
    <property type="project" value="Ensembl"/>
</dbReference>
<dbReference type="GO" id="GO:0004351">
    <property type="term" value="F:glutamate decarboxylase activity"/>
    <property type="evidence" value="ECO:0000250"/>
    <property type="project" value="UniProtKB"/>
</dbReference>
<dbReference type="GO" id="GO:0042802">
    <property type="term" value="F:identical protein binding"/>
    <property type="evidence" value="ECO:0000250"/>
    <property type="project" value="UniProtKB"/>
</dbReference>
<dbReference type="GO" id="GO:0030170">
    <property type="term" value="F:pyridoxal phosphate binding"/>
    <property type="evidence" value="ECO:0007669"/>
    <property type="project" value="InterPro"/>
</dbReference>
<dbReference type="GO" id="GO:0009449">
    <property type="term" value="P:gamma-aminobutyric acid biosynthetic process"/>
    <property type="evidence" value="ECO:0000250"/>
    <property type="project" value="UniProtKB"/>
</dbReference>
<dbReference type="GO" id="GO:0006538">
    <property type="term" value="P:glutamate catabolic process"/>
    <property type="evidence" value="ECO:0000250"/>
    <property type="project" value="UniProtKB"/>
</dbReference>
<dbReference type="GO" id="GO:0035641">
    <property type="term" value="P:locomotory exploration behavior"/>
    <property type="evidence" value="ECO:0007669"/>
    <property type="project" value="Ensembl"/>
</dbReference>
<dbReference type="GO" id="GO:0035176">
    <property type="term" value="P:social behavior"/>
    <property type="evidence" value="ECO:0007669"/>
    <property type="project" value="Ensembl"/>
</dbReference>
<dbReference type="CDD" id="cd06450">
    <property type="entry name" value="DOPA_deC_like"/>
    <property type="match status" value="1"/>
</dbReference>
<dbReference type="FunFam" id="3.90.1150.170:FF:000003">
    <property type="entry name" value="Glutamate decarboxylase 1"/>
    <property type="match status" value="1"/>
</dbReference>
<dbReference type="FunFam" id="3.40.640.10:FF:000016">
    <property type="entry name" value="Glutamate decarboxylase like 1"/>
    <property type="match status" value="1"/>
</dbReference>
<dbReference type="Gene3D" id="3.90.1150.170">
    <property type="match status" value="1"/>
</dbReference>
<dbReference type="Gene3D" id="3.40.640.10">
    <property type="entry name" value="Type I PLP-dependent aspartate aminotransferase-like (Major domain)"/>
    <property type="match status" value="1"/>
</dbReference>
<dbReference type="InterPro" id="IPR002129">
    <property type="entry name" value="PyrdxlP-dep_de-COase"/>
</dbReference>
<dbReference type="InterPro" id="IPR015424">
    <property type="entry name" value="PyrdxlP-dep_Trfase"/>
</dbReference>
<dbReference type="InterPro" id="IPR015421">
    <property type="entry name" value="PyrdxlP-dep_Trfase_major"/>
</dbReference>
<dbReference type="InterPro" id="IPR021115">
    <property type="entry name" value="Pyridoxal-P_BS"/>
</dbReference>
<dbReference type="PANTHER" id="PTHR45677:SF5">
    <property type="entry name" value="GLUTAMATE DECARBOXYLASE 1"/>
    <property type="match status" value="1"/>
</dbReference>
<dbReference type="PANTHER" id="PTHR45677">
    <property type="entry name" value="GLUTAMATE DECARBOXYLASE-RELATED"/>
    <property type="match status" value="1"/>
</dbReference>
<dbReference type="Pfam" id="PF00282">
    <property type="entry name" value="Pyridoxal_deC"/>
    <property type="match status" value="1"/>
</dbReference>
<dbReference type="SUPFAM" id="SSF53383">
    <property type="entry name" value="PLP-dependent transferases"/>
    <property type="match status" value="1"/>
</dbReference>
<dbReference type="PROSITE" id="PS00392">
    <property type="entry name" value="DDC_GAD_HDC_YDC"/>
    <property type="match status" value="1"/>
</dbReference>
<accession>A0PA85</accession>
<comment type="function">
    <text evidence="2">Catalyzes the synthesis of the inhibitory neurotransmitter gamma-aminobutyric acid (GABA) with pyridoxal 5'-phosphate as cofactor.</text>
</comment>
<comment type="catalytic activity">
    <reaction evidence="2">
        <text>L-glutamate + H(+) = 4-aminobutanoate + CO2</text>
        <dbReference type="Rhea" id="RHEA:17785"/>
        <dbReference type="ChEBI" id="CHEBI:15378"/>
        <dbReference type="ChEBI" id="CHEBI:16526"/>
        <dbReference type="ChEBI" id="CHEBI:29985"/>
        <dbReference type="ChEBI" id="CHEBI:59888"/>
        <dbReference type="EC" id="4.1.1.15"/>
    </reaction>
    <physiologicalReaction direction="left-to-right" evidence="2">
        <dbReference type="Rhea" id="RHEA:17786"/>
    </physiologicalReaction>
</comment>
<comment type="cofactor">
    <cofactor evidence="2">
        <name>pyridoxal 5'-phosphate</name>
        <dbReference type="ChEBI" id="CHEBI:597326"/>
    </cofactor>
</comment>
<comment type="subunit">
    <text evidence="2">Homodimer.</text>
</comment>
<comment type="similarity">
    <text evidence="4">Belongs to the group II decarboxylase family.</text>
</comment>
<feature type="chain" id="PRO_0000289581" description="Glutamate decarboxylase 1">
    <location>
        <begin position="1"/>
        <end position="594"/>
    </location>
</feature>
<feature type="region of interest" description="Disordered" evidence="3">
    <location>
        <begin position="1"/>
        <end position="22"/>
    </location>
</feature>
<feature type="compositionally biased region" description="Low complexity" evidence="3">
    <location>
        <begin position="1"/>
        <end position="13"/>
    </location>
</feature>
<feature type="binding site" evidence="2">
    <location>
        <begin position="190"/>
        <end position="192"/>
    </location>
    <ligand>
        <name>4-aminobutanoate</name>
        <dbReference type="ChEBI" id="CHEBI:59888"/>
    </ligand>
</feature>
<feature type="binding site" evidence="2">
    <location>
        <position position="567"/>
    </location>
    <ligand>
        <name>4-aminobutanoate</name>
        <dbReference type="ChEBI" id="CHEBI:59888"/>
    </ligand>
</feature>
<feature type="modified residue" description="Phosphoserine" evidence="1">
    <location>
        <position position="78"/>
    </location>
</feature>
<feature type="modified residue" description="N6-(pyridoxal phosphate)lysine" evidence="2">
    <location>
        <position position="405"/>
    </location>
</feature>
<sequence>MASSTPSSSATSSNAGADPNTANLRPTTYDTWCGVAHGCTRKLGLKICGFLQRTNSLEEKSRLVSAFKERQSSKNLLSCENSDRDGRFRRTETDFSNLFARDLLPAKNGEEQTVQFLLEVVDILLNYVRKTFDRSTKVLDFHHPHQLLEGMEGFNLELSDHPESLEQILVDCRDTLKYGVRTGHPRFFNQLSTGLDIIGLAGEWLTSTANTNMFTYEIAPVFVLMEQITLKKMREIVGWSSKDGDGIFSPGGAISNMYSIMAARYKFFPEVKTKGMAAVPKLVLFTSEHSHYSIKKAGAALGFGTDNVILIKCNERGKIIPADLEAKILEAKQKGYVPLYVNATAGTTVYGAFDPIQEIADICEKYNLWLHVDAAWGGGLLMSRKHRHKLSGIERANSVTWNPHKMMGVLLQCSAILVKEKGILQGCNQMCAGYLFQPDKQYDVSYDTGDKAIQCGRHVDIFKFWLMWKAKGTVGFENQINKCLELAEYLYAKIKNREEFEMVFDGEPEHTNVCFWYIPQSLRGIPDSPERREKLHRVAPKIKALMMESGTTMVGYQPQGDKANFFRMVISNPAATQSDIDFLIEEIERLGQDL</sequence>
<proteinExistence type="evidence at transcript level"/>
<evidence type="ECO:0000250" key="1">
    <source>
        <dbReference type="UniProtKB" id="P48318"/>
    </source>
</evidence>
<evidence type="ECO:0000250" key="2">
    <source>
        <dbReference type="UniProtKB" id="Q99259"/>
    </source>
</evidence>
<evidence type="ECO:0000256" key="3">
    <source>
        <dbReference type="SAM" id="MobiDB-lite"/>
    </source>
</evidence>
<evidence type="ECO:0000305" key="4"/>
<keyword id="KW-0210">Decarboxylase</keyword>
<keyword id="KW-0456">Lyase</keyword>
<keyword id="KW-0530">Neurotransmitter biosynthesis</keyword>
<keyword id="KW-0597">Phosphoprotein</keyword>
<keyword id="KW-0663">Pyridoxal phosphate</keyword>
<keyword id="KW-1185">Reference proteome</keyword>
<protein>
    <recommendedName>
        <fullName>Glutamate decarboxylase 1</fullName>
        <ecNumber evidence="2">4.1.1.15</ecNumber>
    </recommendedName>
    <alternativeName>
        <fullName>67 kDa glutamic acid decarboxylase</fullName>
        <shortName>GAD-67</shortName>
    </alternativeName>
    <alternativeName>
        <fullName>Glutamate decarboxylase 67 kDa isoform</fullName>
    </alternativeName>
</protein>